<reference key="1">
    <citation type="journal article" date="1992" name="J. Gen. Virol.">
        <title>Nucleotide sequence of shallot virus X RNA reveals a 5'-proximal cistron closely related to those of potexviruses and a unique arrangement of the 3'-proximal cistrons.</title>
        <authorList>
            <person name="Kanyuka K.V."/>
            <person name="Vishnichenko V.K."/>
            <person name="Levay K.E."/>
            <person name="Kondrikov D.Y."/>
            <person name="Ryabov E.V."/>
            <person name="Zavriev S.K."/>
        </authorList>
    </citation>
    <scope>NUCLEOTIDE SEQUENCE [GENOMIC RNA]</scope>
</reference>
<name>ORF4_SHVX</name>
<proteinExistence type="predicted"/>
<accession>Q04583</accession>
<organismHost>
    <name type="scientific">Allium cepa var. aggregatum</name>
    <name type="common">Shallot</name>
    <name type="synonym">Allium ascalonicum</name>
    <dbReference type="NCBI Taxonomy" id="28911"/>
</organismHost>
<evidence type="ECO:0000256" key="1">
    <source>
        <dbReference type="SAM" id="MobiDB-lite"/>
    </source>
</evidence>
<gene>
    <name type="ORF">ORF4</name>
</gene>
<feature type="chain" id="PRO_0000222659" description="Uncharacterized ORF4 protein">
    <location>
        <begin position="1"/>
        <end position="380"/>
    </location>
</feature>
<feature type="region of interest" description="Disordered" evidence="1">
    <location>
        <begin position="251"/>
        <end position="275"/>
    </location>
</feature>
<feature type="compositionally biased region" description="Low complexity" evidence="1">
    <location>
        <begin position="260"/>
        <end position="272"/>
    </location>
</feature>
<organism>
    <name type="scientific">Shallot virus X</name>
    <name type="common">ShVX</name>
    <dbReference type="NCBI Taxonomy" id="31770"/>
    <lineage>
        <taxon>Viruses</taxon>
        <taxon>Riboviria</taxon>
        <taxon>Orthornavirae</taxon>
        <taxon>Kitrinoviricota</taxon>
        <taxon>Alsuviricetes</taxon>
        <taxon>Tymovirales</taxon>
        <taxon>Alphaflexiviridae</taxon>
        <taxon>Allexivirus</taxon>
        <taxon>Acarallexivirus</taxon>
    </lineage>
</organism>
<protein>
    <recommendedName>
        <fullName>Uncharacterized ORF4 protein</fullName>
    </recommendedName>
    <alternativeName>
        <fullName>42 kDa protein</fullName>
    </alternativeName>
</protein>
<keyword id="KW-1185">Reference proteome</keyword>
<sequence>MVIVTTFHIDAARDRIINCVKDVRNIVTNQVVPATRKLGSIETTLENFRTETIGGFTTISDCVSLLRNLRSETTRNFNTLLSRTAEPTGQAQTQLRQGFDEPDGHKSEQRTFFSNLDTALNATQALLNHVPPARYTLPPAPLPVNESFGQLHALHLNTLEWLTHINHNLDSMLNMLNPANLMSQGTPLSRLKDAVRTLTQNMNTIQSDQQKILASTSATNHSDILRKLESLDTGLKQLGIRLDVVVSSLNNMSERPPTPSHDTASSSTSTDPNPLPPYQAVHPSLFCRTYGNILYNGIDSRIPMDVTGRPASTSLKLTITVECSEQNTRVNFTLLDDGYILLSDSIETKHKLQHIPSDCLSLIHARCPKFVYKFRGEGLC</sequence>
<dbReference type="EMBL" id="M97264">
    <property type="protein sequence ID" value="AAA47790.1"/>
    <property type="molecule type" value="Genomic_RNA"/>
</dbReference>
<dbReference type="PIR" id="JQ1737">
    <property type="entry name" value="JQ1737"/>
</dbReference>
<dbReference type="RefSeq" id="NP_620651.1">
    <property type="nucleotide sequence ID" value="NC_003795.1"/>
</dbReference>
<dbReference type="SMR" id="Q04583"/>
<dbReference type="KEGG" id="vg:944367"/>
<dbReference type="OrthoDB" id="9474at10239"/>
<dbReference type="Proteomes" id="UP000001663">
    <property type="component" value="Genome"/>
</dbReference>
<dbReference type="InterPro" id="IPR008398">
    <property type="entry name" value="Allexi_40kDa"/>
</dbReference>
<dbReference type="Pfam" id="PF05549">
    <property type="entry name" value="Allexi_40kDa"/>
    <property type="match status" value="1"/>
</dbReference>
<dbReference type="PIRSF" id="PIRSF005512">
    <property type="entry name" value="Allexi_40kDa"/>
    <property type="match status" value="1"/>
</dbReference>